<evidence type="ECO:0000250" key="1"/>
<evidence type="ECO:0000305" key="2"/>
<comment type="subcellular location">
    <subcellularLocation>
        <location evidence="1">Cytoplasm</location>
    </subcellularLocation>
</comment>
<proteinExistence type="inferred from homology"/>
<reference key="1">
    <citation type="journal article" date="2001" name="Nature">
        <title>Genome sequence of enterohaemorrhagic Escherichia coli O157:H7.</title>
        <authorList>
            <person name="Perna N.T."/>
            <person name="Plunkett G. III"/>
            <person name="Burland V."/>
            <person name="Mau B."/>
            <person name="Glasner J.D."/>
            <person name="Rose D.J."/>
            <person name="Mayhew G.F."/>
            <person name="Evans P.S."/>
            <person name="Gregor J."/>
            <person name="Kirkpatrick H.A."/>
            <person name="Posfai G."/>
            <person name="Hackett J."/>
            <person name="Klink S."/>
            <person name="Boutin A."/>
            <person name="Shao Y."/>
            <person name="Miller L."/>
            <person name="Grotbeck E.J."/>
            <person name="Davis N.W."/>
            <person name="Lim A."/>
            <person name="Dimalanta E.T."/>
            <person name="Potamousis K."/>
            <person name="Apodaca J."/>
            <person name="Anantharaman T.S."/>
            <person name="Lin J."/>
            <person name="Yen G."/>
            <person name="Schwartz D.C."/>
            <person name="Welch R.A."/>
            <person name="Blattner F.R."/>
        </authorList>
    </citation>
    <scope>NUCLEOTIDE SEQUENCE [LARGE SCALE GENOMIC DNA]</scope>
    <source>
        <strain>O157:H7 / EDL933 / ATCC 700927 / EHEC</strain>
    </source>
</reference>
<reference key="2">
    <citation type="journal article" date="2001" name="DNA Res.">
        <title>Complete genome sequence of enterohemorrhagic Escherichia coli O157:H7 and genomic comparison with a laboratory strain K-12.</title>
        <authorList>
            <person name="Hayashi T."/>
            <person name="Makino K."/>
            <person name="Ohnishi M."/>
            <person name="Kurokawa K."/>
            <person name="Ishii K."/>
            <person name="Yokoyama K."/>
            <person name="Han C.-G."/>
            <person name="Ohtsubo E."/>
            <person name="Nakayama K."/>
            <person name="Murata T."/>
            <person name="Tanaka M."/>
            <person name="Tobe T."/>
            <person name="Iida T."/>
            <person name="Takami H."/>
            <person name="Honda T."/>
            <person name="Sasakawa C."/>
            <person name="Ogasawara N."/>
            <person name="Yasunaga T."/>
            <person name="Kuhara S."/>
            <person name="Shiba T."/>
            <person name="Hattori M."/>
            <person name="Shinagawa H."/>
        </authorList>
    </citation>
    <scope>NUCLEOTIDE SEQUENCE [LARGE SCALE GENOMIC DNA]</scope>
    <source>
        <strain>O157:H7 / Sakai / RIMD 0509952 / EHEC</strain>
    </source>
</reference>
<feature type="chain" id="PRO_0000100263" description="Cold shock-like protein CspG">
    <location>
        <begin position="1"/>
        <end position="70"/>
    </location>
</feature>
<feature type="domain" description="CSD">
    <location>
        <begin position="7"/>
        <end position="67"/>
    </location>
</feature>
<feature type="sequence conflict" description="In Ref. 1." evidence="2" ref="1">
    <location>
        <position position="70"/>
    </location>
</feature>
<name>CSPG_ECO57</name>
<organism>
    <name type="scientific">Escherichia coli O157:H7</name>
    <dbReference type="NCBI Taxonomy" id="83334"/>
    <lineage>
        <taxon>Bacteria</taxon>
        <taxon>Pseudomonadati</taxon>
        <taxon>Pseudomonadota</taxon>
        <taxon>Gammaproteobacteria</taxon>
        <taxon>Enterobacterales</taxon>
        <taxon>Enterobacteriaceae</taxon>
        <taxon>Escherichia</taxon>
    </lineage>
</organism>
<accession>P0A980</accession>
<accession>Q47130</accession>
<sequence length="70" mass="7781">MSNKMTGLVKWFNADKGFGFITPDDGSKDVFVHFTAIQSNEFRTLNENQKVEFSIEQGQRGPAAANVVTL</sequence>
<gene>
    <name type="primary">cspG</name>
    <name type="ordered locus">Z1406</name>
    <name type="ordered locus">ECs1145</name>
</gene>
<protein>
    <recommendedName>
        <fullName>Cold shock-like protein CspG</fullName>
        <shortName>CPS-G</shortName>
    </recommendedName>
</protein>
<dbReference type="EMBL" id="AE005174">
    <property type="protein sequence ID" value="AAG55537.1"/>
    <property type="molecule type" value="Genomic_DNA"/>
</dbReference>
<dbReference type="EMBL" id="BA000007">
    <property type="protein sequence ID" value="BAB34568.1"/>
    <property type="molecule type" value="Genomic_DNA"/>
</dbReference>
<dbReference type="PIR" id="A90772">
    <property type="entry name" value="A90772"/>
</dbReference>
<dbReference type="RefSeq" id="NP_309172.1">
    <property type="nucleotide sequence ID" value="NC_002695.1"/>
</dbReference>
<dbReference type="RefSeq" id="WP_000066490.1">
    <property type="nucleotide sequence ID" value="NZ_VOAI01000025.1"/>
</dbReference>
<dbReference type="SMR" id="P0A980"/>
<dbReference type="STRING" id="155864.Z1406"/>
<dbReference type="GeneID" id="912577"/>
<dbReference type="GeneID" id="93776422"/>
<dbReference type="KEGG" id="ece:Z1406"/>
<dbReference type="KEGG" id="ecs:ECs_1145"/>
<dbReference type="PATRIC" id="fig|386585.9.peg.1261"/>
<dbReference type="eggNOG" id="COG1278">
    <property type="taxonomic scope" value="Bacteria"/>
</dbReference>
<dbReference type="HOGENOM" id="CLU_117621_2_1_6"/>
<dbReference type="OMA" id="DGQKVQF"/>
<dbReference type="Proteomes" id="UP000000558">
    <property type="component" value="Chromosome"/>
</dbReference>
<dbReference type="Proteomes" id="UP000002519">
    <property type="component" value="Chromosome"/>
</dbReference>
<dbReference type="GO" id="GO:0005829">
    <property type="term" value="C:cytosol"/>
    <property type="evidence" value="ECO:0007669"/>
    <property type="project" value="UniProtKB-ARBA"/>
</dbReference>
<dbReference type="GO" id="GO:0003677">
    <property type="term" value="F:DNA binding"/>
    <property type="evidence" value="ECO:0007669"/>
    <property type="project" value="UniProtKB-KW"/>
</dbReference>
<dbReference type="CDD" id="cd04458">
    <property type="entry name" value="CSP_CDS"/>
    <property type="match status" value="1"/>
</dbReference>
<dbReference type="FunFam" id="2.40.50.140:FF:000006">
    <property type="entry name" value="Cold shock protein CspC"/>
    <property type="match status" value="1"/>
</dbReference>
<dbReference type="Gene3D" id="6.20.370.130">
    <property type="match status" value="1"/>
</dbReference>
<dbReference type="Gene3D" id="2.40.50.140">
    <property type="entry name" value="Nucleic acid-binding proteins"/>
    <property type="match status" value="1"/>
</dbReference>
<dbReference type="InterPro" id="IPR012156">
    <property type="entry name" value="Cold_shock_CspA"/>
</dbReference>
<dbReference type="InterPro" id="IPR050181">
    <property type="entry name" value="Cold_shock_domain"/>
</dbReference>
<dbReference type="InterPro" id="IPR011129">
    <property type="entry name" value="CSD"/>
</dbReference>
<dbReference type="InterPro" id="IPR019844">
    <property type="entry name" value="CSD_CS"/>
</dbReference>
<dbReference type="InterPro" id="IPR002059">
    <property type="entry name" value="CSP_DNA-bd"/>
</dbReference>
<dbReference type="InterPro" id="IPR012340">
    <property type="entry name" value="NA-bd_OB-fold"/>
</dbReference>
<dbReference type="NCBIfam" id="NF007378">
    <property type="entry name" value="PRK09890.1"/>
    <property type="match status" value="1"/>
</dbReference>
<dbReference type="NCBIfam" id="NF007679">
    <property type="entry name" value="PRK10354.1"/>
    <property type="match status" value="1"/>
</dbReference>
<dbReference type="PANTHER" id="PTHR11544">
    <property type="entry name" value="COLD SHOCK DOMAIN CONTAINING PROTEINS"/>
    <property type="match status" value="1"/>
</dbReference>
<dbReference type="Pfam" id="PF00313">
    <property type="entry name" value="CSD"/>
    <property type="match status" value="1"/>
</dbReference>
<dbReference type="PIRSF" id="PIRSF002599">
    <property type="entry name" value="Cold_shock_A"/>
    <property type="match status" value="1"/>
</dbReference>
<dbReference type="PRINTS" id="PR00050">
    <property type="entry name" value="COLDSHOCK"/>
</dbReference>
<dbReference type="SMART" id="SM00357">
    <property type="entry name" value="CSP"/>
    <property type="match status" value="1"/>
</dbReference>
<dbReference type="SUPFAM" id="SSF50249">
    <property type="entry name" value="Nucleic acid-binding proteins"/>
    <property type="match status" value="1"/>
</dbReference>
<dbReference type="PROSITE" id="PS00352">
    <property type="entry name" value="CSD_1"/>
    <property type="match status" value="1"/>
</dbReference>
<dbReference type="PROSITE" id="PS51857">
    <property type="entry name" value="CSD_2"/>
    <property type="match status" value="1"/>
</dbReference>
<keyword id="KW-0010">Activator</keyword>
<keyword id="KW-0963">Cytoplasm</keyword>
<keyword id="KW-0238">DNA-binding</keyword>
<keyword id="KW-1185">Reference proteome</keyword>
<keyword id="KW-0804">Transcription</keyword>
<keyword id="KW-0805">Transcription regulation</keyword>